<evidence type="ECO:0000255" key="1">
    <source>
        <dbReference type="HAMAP-Rule" id="MF_01180"/>
    </source>
</evidence>
<accession>Q83R41</accession>
<accession>Q7C168</accession>
<comment type="function">
    <text evidence="1">Dual-function protein that regulates the transcription of class 2 flagellar operons and that also acts as an export chaperone for the filament-capping protein FliD. As a transcriptional regulator, acts as an anti-FlhDC factor; it directly binds FlhC, thus inhibiting the binding of the FlhC/FlhD complex to class 2 promoters, resulting in decreased expression of class 2 flagellar operons. As a chaperone, effects FliD transition to the membrane by preventing its premature polymerization, and by directing it to the export apparatus.</text>
</comment>
<comment type="subunit">
    <text evidence="1">Homodimer. Interacts with FliD and FlhC.</text>
</comment>
<comment type="subcellular location">
    <subcellularLocation>
        <location evidence="1">Cytoplasm</location>
        <location evidence="1">Cytosol</location>
    </subcellularLocation>
</comment>
<comment type="similarity">
    <text evidence="1">Belongs to the FliT family.</text>
</comment>
<organism>
    <name type="scientific">Shigella flexneri</name>
    <dbReference type="NCBI Taxonomy" id="623"/>
    <lineage>
        <taxon>Bacteria</taxon>
        <taxon>Pseudomonadati</taxon>
        <taxon>Pseudomonadota</taxon>
        <taxon>Gammaproteobacteria</taxon>
        <taxon>Enterobacterales</taxon>
        <taxon>Enterobacteriaceae</taxon>
        <taxon>Shigella</taxon>
    </lineage>
</organism>
<sequence>MNNAPHLYFAWQQLVEKSQLMLRLATEEQWDELIASEMAYVNAVQEIAHLTEEVAPSTTMQEQLRPMLHLILDNESKVKQLLQIRMDELAKLVGQSSVQKSVLSAYGDQGGFVLAPQDNLF</sequence>
<name>FLIT_SHIFL</name>
<protein>
    <recommendedName>
        <fullName evidence="1">Flagellar protein FliT</fullName>
    </recommendedName>
</protein>
<dbReference type="EMBL" id="AE005674">
    <property type="protein sequence ID" value="AAN43519.1"/>
    <property type="molecule type" value="Genomic_DNA"/>
</dbReference>
<dbReference type="EMBL" id="AE014073">
    <property type="protein sequence ID" value="AAP17348.1"/>
    <property type="molecule type" value="Genomic_DNA"/>
</dbReference>
<dbReference type="RefSeq" id="NP_707812.1">
    <property type="nucleotide sequence ID" value="NC_004337.2"/>
</dbReference>
<dbReference type="RefSeq" id="WP_001057836.1">
    <property type="nucleotide sequence ID" value="NZ_WPGW01000033.1"/>
</dbReference>
<dbReference type="SMR" id="Q83R41"/>
<dbReference type="STRING" id="198214.SF1969"/>
<dbReference type="PaxDb" id="198214-SF1969"/>
<dbReference type="GeneID" id="1025204"/>
<dbReference type="KEGG" id="sfl:SF1969"/>
<dbReference type="KEGG" id="sfx:S2065"/>
<dbReference type="PATRIC" id="fig|198214.7.peg.2350"/>
<dbReference type="HOGENOM" id="CLU_155793_1_1_6"/>
<dbReference type="Proteomes" id="UP000001006">
    <property type="component" value="Chromosome"/>
</dbReference>
<dbReference type="Proteomes" id="UP000002673">
    <property type="component" value="Chromosome"/>
</dbReference>
<dbReference type="GO" id="GO:0005829">
    <property type="term" value="C:cytosol"/>
    <property type="evidence" value="ECO:0007669"/>
    <property type="project" value="UniProtKB-SubCell"/>
</dbReference>
<dbReference type="GO" id="GO:0044781">
    <property type="term" value="P:bacterial-type flagellum organization"/>
    <property type="evidence" value="ECO:0007669"/>
    <property type="project" value="UniProtKB-KW"/>
</dbReference>
<dbReference type="GO" id="GO:1902209">
    <property type="term" value="P:negative regulation of bacterial-type flagellum assembly"/>
    <property type="evidence" value="ECO:0007669"/>
    <property type="project" value="UniProtKB-UniRule"/>
</dbReference>
<dbReference type="GO" id="GO:0006457">
    <property type="term" value="P:protein folding"/>
    <property type="evidence" value="ECO:0007669"/>
    <property type="project" value="UniProtKB-UniRule"/>
</dbReference>
<dbReference type="FunFam" id="1.20.58.380:FF:000001">
    <property type="entry name" value="Flagellar protein FliT"/>
    <property type="match status" value="1"/>
</dbReference>
<dbReference type="Gene3D" id="1.20.58.380">
    <property type="entry name" value="Flagellar protein flit"/>
    <property type="match status" value="1"/>
</dbReference>
<dbReference type="HAMAP" id="MF_01180">
    <property type="entry name" value="FliT"/>
    <property type="match status" value="1"/>
</dbReference>
<dbReference type="InterPro" id="IPR008622">
    <property type="entry name" value="FliT"/>
</dbReference>
<dbReference type="NCBIfam" id="NF007836">
    <property type="entry name" value="PRK10548.1"/>
    <property type="match status" value="1"/>
</dbReference>
<dbReference type="Pfam" id="PF05400">
    <property type="entry name" value="FliT"/>
    <property type="match status" value="1"/>
</dbReference>
<gene>
    <name evidence="1" type="primary">fliT</name>
    <name type="ordered locus">SF1969</name>
    <name type="ordered locus">S2065</name>
</gene>
<reference key="1">
    <citation type="journal article" date="2002" name="Nucleic Acids Res.">
        <title>Genome sequence of Shigella flexneri 2a: insights into pathogenicity through comparison with genomes of Escherichia coli K12 and O157.</title>
        <authorList>
            <person name="Jin Q."/>
            <person name="Yuan Z."/>
            <person name="Xu J."/>
            <person name="Wang Y."/>
            <person name="Shen Y."/>
            <person name="Lu W."/>
            <person name="Wang J."/>
            <person name="Liu H."/>
            <person name="Yang J."/>
            <person name="Yang F."/>
            <person name="Zhang X."/>
            <person name="Zhang J."/>
            <person name="Yang G."/>
            <person name="Wu H."/>
            <person name="Qu D."/>
            <person name="Dong J."/>
            <person name="Sun L."/>
            <person name="Xue Y."/>
            <person name="Zhao A."/>
            <person name="Gao Y."/>
            <person name="Zhu J."/>
            <person name="Kan B."/>
            <person name="Ding K."/>
            <person name="Chen S."/>
            <person name="Cheng H."/>
            <person name="Yao Z."/>
            <person name="He B."/>
            <person name="Chen R."/>
            <person name="Ma D."/>
            <person name="Qiang B."/>
            <person name="Wen Y."/>
            <person name="Hou Y."/>
            <person name="Yu J."/>
        </authorList>
    </citation>
    <scope>NUCLEOTIDE SEQUENCE [LARGE SCALE GENOMIC DNA]</scope>
    <source>
        <strain>301 / Serotype 2a</strain>
    </source>
</reference>
<reference key="2">
    <citation type="journal article" date="2003" name="Infect. Immun.">
        <title>Complete genome sequence and comparative genomics of Shigella flexneri serotype 2a strain 2457T.</title>
        <authorList>
            <person name="Wei J."/>
            <person name="Goldberg M.B."/>
            <person name="Burland V."/>
            <person name="Venkatesan M.M."/>
            <person name="Deng W."/>
            <person name="Fournier G."/>
            <person name="Mayhew G.F."/>
            <person name="Plunkett G. III"/>
            <person name="Rose D.J."/>
            <person name="Darling A."/>
            <person name="Mau B."/>
            <person name="Perna N.T."/>
            <person name="Payne S.M."/>
            <person name="Runyen-Janecky L.J."/>
            <person name="Zhou S."/>
            <person name="Schwartz D.C."/>
            <person name="Blattner F.R."/>
        </authorList>
    </citation>
    <scope>NUCLEOTIDE SEQUENCE [LARGE SCALE GENOMIC DNA]</scope>
    <source>
        <strain>ATCC 700930 / 2457T / Serotype 2a</strain>
    </source>
</reference>
<keyword id="KW-1005">Bacterial flagellum biogenesis</keyword>
<keyword id="KW-0143">Chaperone</keyword>
<keyword id="KW-0963">Cytoplasm</keyword>
<keyword id="KW-1185">Reference proteome</keyword>
<keyword id="KW-0678">Repressor</keyword>
<keyword id="KW-0804">Transcription</keyword>
<keyword id="KW-0805">Transcription regulation</keyword>
<proteinExistence type="inferred from homology"/>
<feature type="chain" id="PRO_0000353892" description="Flagellar protein FliT">
    <location>
        <begin position="1"/>
        <end position="121"/>
    </location>
</feature>
<feature type="region of interest" description="Required for homodimerization" evidence="1">
    <location>
        <begin position="1"/>
        <end position="50"/>
    </location>
</feature>
<feature type="region of interest" description="FliD binding" evidence="1">
    <location>
        <begin position="60"/>
        <end position="98"/>
    </location>
</feature>